<comment type="function">
    <text>Could be involved in the regulation of nitrogen fixation.</text>
</comment>
<comment type="similarity">
    <text evidence="1">Belongs to the P(II) protein family.</text>
</comment>
<dbReference type="EMBL" id="X56073">
    <property type="protein sequence ID" value="CAA39557.1"/>
    <property type="molecule type" value="Genomic_DNA"/>
</dbReference>
<dbReference type="SMR" id="P54808"/>
<dbReference type="GO" id="GO:0005829">
    <property type="term" value="C:cytosol"/>
    <property type="evidence" value="ECO:0007669"/>
    <property type="project" value="TreeGrafter"/>
</dbReference>
<dbReference type="GO" id="GO:0005524">
    <property type="term" value="F:ATP binding"/>
    <property type="evidence" value="ECO:0007669"/>
    <property type="project" value="TreeGrafter"/>
</dbReference>
<dbReference type="GO" id="GO:0030234">
    <property type="term" value="F:enzyme regulator activity"/>
    <property type="evidence" value="ECO:0007669"/>
    <property type="project" value="InterPro"/>
</dbReference>
<dbReference type="GO" id="GO:0009399">
    <property type="term" value="P:nitrogen fixation"/>
    <property type="evidence" value="ECO:0007669"/>
    <property type="project" value="UniProtKB-KW"/>
</dbReference>
<dbReference type="GO" id="GO:0006808">
    <property type="term" value="P:regulation of nitrogen utilization"/>
    <property type="evidence" value="ECO:0007669"/>
    <property type="project" value="InterPro"/>
</dbReference>
<dbReference type="Gene3D" id="3.30.70.120">
    <property type="match status" value="1"/>
</dbReference>
<dbReference type="InterPro" id="IPR002187">
    <property type="entry name" value="N-reg_PII"/>
</dbReference>
<dbReference type="InterPro" id="IPR011322">
    <property type="entry name" value="N-reg_PII-like_a/b"/>
</dbReference>
<dbReference type="InterPro" id="IPR015867">
    <property type="entry name" value="N-reg_PII/ATP_PRibTrfase_C"/>
</dbReference>
<dbReference type="InterPro" id="IPR017918">
    <property type="entry name" value="N-reg_PII_CS"/>
</dbReference>
<dbReference type="PANTHER" id="PTHR30115">
    <property type="entry name" value="NITROGEN REGULATORY PROTEIN P-II"/>
    <property type="match status" value="1"/>
</dbReference>
<dbReference type="PANTHER" id="PTHR30115:SF13">
    <property type="entry name" value="PII-LIKE PROTEIN GLNBI"/>
    <property type="match status" value="1"/>
</dbReference>
<dbReference type="Pfam" id="PF00543">
    <property type="entry name" value="P-II"/>
    <property type="match status" value="1"/>
</dbReference>
<dbReference type="PRINTS" id="PR00340">
    <property type="entry name" value="PIIGLNB"/>
</dbReference>
<dbReference type="SMART" id="SM00938">
    <property type="entry name" value="P-II"/>
    <property type="match status" value="1"/>
</dbReference>
<dbReference type="SUPFAM" id="SSF54913">
    <property type="entry name" value="GlnB-like"/>
    <property type="match status" value="1"/>
</dbReference>
<dbReference type="PROSITE" id="PS00638">
    <property type="entry name" value="PII_GLNB_CTER"/>
    <property type="match status" value="1"/>
</dbReference>
<dbReference type="PROSITE" id="PS51343">
    <property type="entry name" value="PII_GLNB_DOM"/>
    <property type="match status" value="1"/>
</dbReference>
<protein>
    <recommendedName>
        <fullName>Nitrogen fixation nifHD1 region GlnB-like protein 1</fullName>
    </recommendedName>
    <alternativeName>
        <fullName>ORF-105</fullName>
    </alternativeName>
</protein>
<proteinExistence type="inferred from homology"/>
<organism>
    <name type="scientific">Methanosarcina barkeri</name>
    <dbReference type="NCBI Taxonomy" id="2208"/>
    <lineage>
        <taxon>Archaea</taxon>
        <taxon>Methanobacteriati</taxon>
        <taxon>Methanobacteriota</taxon>
        <taxon>Stenosarchaea group</taxon>
        <taxon>Methanomicrobia</taxon>
        <taxon>Methanosarcinales</taxon>
        <taxon>Methanosarcinaceae</taxon>
        <taxon>Methanosarcina</taxon>
    </lineage>
</organism>
<feature type="chain" id="PRO_0000139800" description="Nitrogen fixation nifHD1 region GlnB-like protein 1">
    <location>
        <begin position="1"/>
        <end position="105"/>
    </location>
</feature>
<accession>P54808</accession>
<gene>
    <name type="primary">glnBA</name>
</gene>
<keyword id="KW-0535">Nitrogen fixation</keyword>
<keyword id="KW-0804">Transcription</keyword>
<keyword id="KW-0805">Transcription regulation</keyword>
<evidence type="ECO:0000255" key="1">
    <source>
        <dbReference type="PROSITE-ProRule" id="PRU00675"/>
    </source>
</evidence>
<sequence length="105" mass="11875">MQMIRAIIRPGMETKVIECLEKEGCISLTKMEVFGRGKQKGIHIADISYDELQKTMLLMVVEDEHKDRAIKTIMESARTGKYGDGRIFVTPVEEAYTIRTGKPGL</sequence>
<reference key="1">
    <citation type="journal article" date="1991" name="Res. Microbiol.">
        <title>Nucleotide sequence of nifH regions from Methanobacterium ivanovii and Methanosarcina barkeri 227 and characterization of glnB-like genes.</title>
        <authorList>
            <person name="Sibold L."/>
            <person name="Henriquet M."/>
            <person name="Possot O."/>
            <person name="Aubert J.-P."/>
        </authorList>
    </citation>
    <scope>NUCLEOTIDE SEQUENCE [GENOMIC DNA]</scope>
    <source>
        <strain>ATCC 43241 / DSM 1538 / 227</strain>
    </source>
</reference>
<name>GLNB1_METBA</name>